<protein>
    <recommendedName>
        <fullName evidence="1">Large ribosomal subunit protein eL43</fullName>
    </recommendedName>
    <alternativeName>
        <fullName evidence="2">50S ribosomal protein L37Ae</fullName>
    </alternativeName>
    <alternativeName>
        <fullName evidence="1">Ribosomal protein L43e</fullName>
    </alternativeName>
</protein>
<name>RL37A_PICTO</name>
<gene>
    <name evidence="1" type="primary">rpl37ae</name>
    <name type="ordered locus">PTO0392</name>
</gene>
<proteinExistence type="inferred from homology"/>
<comment type="function">
    <text evidence="1">Binds to the 23S rRNA.</text>
</comment>
<comment type="cofactor">
    <cofactor evidence="1">
        <name>Zn(2+)</name>
        <dbReference type="ChEBI" id="CHEBI:29105"/>
    </cofactor>
    <text evidence="1">Binds 1 zinc ion per subunit.</text>
</comment>
<comment type="subunit">
    <text evidence="1">Part of the 50S ribosomal subunit.</text>
</comment>
<comment type="similarity">
    <text evidence="1">Belongs to the eukaryotic ribosomal protein eL43 family. Putative zinc-binding subfamily.</text>
</comment>
<evidence type="ECO:0000255" key="1">
    <source>
        <dbReference type="HAMAP-Rule" id="MF_00327"/>
    </source>
</evidence>
<evidence type="ECO:0000305" key="2"/>
<dbReference type="EMBL" id="AE017261">
    <property type="protein sequence ID" value="AAT42977.1"/>
    <property type="molecule type" value="Genomic_DNA"/>
</dbReference>
<dbReference type="RefSeq" id="WP_011177193.1">
    <property type="nucleotide sequence ID" value="NC_005877.1"/>
</dbReference>
<dbReference type="SMR" id="Q6L225"/>
<dbReference type="FunCoup" id="Q6L225">
    <property type="interactions" value="144"/>
</dbReference>
<dbReference type="STRING" id="263820.PTO0392"/>
<dbReference type="PaxDb" id="263820-PTO0392"/>
<dbReference type="GeneID" id="2844466"/>
<dbReference type="KEGG" id="pto:PTO0392"/>
<dbReference type="PATRIC" id="fig|263820.9.peg.416"/>
<dbReference type="eggNOG" id="arCOG04208">
    <property type="taxonomic scope" value="Archaea"/>
</dbReference>
<dbReference type="HOGENOM" id="CLU_141199_2_1_2"/>
<dbReference type="InParanoid" id="Q6L225"/>
<dbReference type="OrthoDB" id="372011at2157"/>
<dbReference type="Proteomes" id="UP000000438">
    <property type="component" value="Chromosome"/>
</dbReference>
<dbReference type="GO" id="GO:1990904">
    <property type="term" value="C:ribonucleoprotein complex"/>
    <property type="evidence" value="ECO:0007669"/>
    <property type="project" value="UniProtKB-KW"/>
</dbReference>
<dbReference type="GO" id="GO:0005840">
    <property type="term" value="C:ribosome"/>
    <property type="evidence" value="ECO:0007669"/>
    <property type="project" value="UniProtKB-KW"/>
</dbReference>
<dbReference type="GO" id="GO:0070180">
    <property type="term" value="F:large ribosomal subunit rRNA binding"/>
    <property type="evidence" value="ECO:0007669"/>
    <property type="project" value="UniProtKB-UniRule"/>
</dbReference>
<dbReference type="GO" id="GO:0003735">
    <property type="term" value="F:structural constituent of ribosome"/>
    <property type="evidence" value="ECO:0007669"/>
    <property type="project" value="InterPro"/>
</dbReference>
<dbReference type="GO" id="GO:0008270">
    <property type="term" value="F:zinc ion binding"/>
    <property type="evidence" value="ECO:0007669"/>
    <property type="project" value="UniProtKB-UniRule"/>
</dbReference>
<dbReference type="GO" id="GO:0006412">
    <property type="term" value="P:translation"/>
    <property type="evidence" value="ECO:0007669"/>
    <property type="project" value="UniProtKB-UniRule"/>
</dbReference>
<dbReference type="Gene3D" id="2.20.25.30">
    <property type="match status" value="1"/>
</dbReference>
<dbReference type="HAMAP" id="MF_00327">
    <property type="entry name" value="Ribosomal_eL43"/>
    <property type="match status" value="1"/>
</dbReference>
<dbReference type="InterPro" id="IPR011331">
    <property type="entry name" value="Ribosomal_eL37/eL43"/>
</dbReference>
<dbReference type="InterPro" id="IPR002674">
    <property type="entry name" value="Ribosomal_eL43"/>
</dbReference>
<dbReference type="InterPro" id="IPR050522">
    <property type="entry name" value="Ribosomal_protein_eL43"/>
</dbReference>
<dbReference type="InterPro" id="IPR011332">
    <property type="entry name" value="Ribosomal_zn-bd"/>
</dbReference>
<dbReference type="NCBIfam" id="NF003058">
    <property type="entry name" value="PRK03976.1"/>
    <property type="match status" value="1"/>
</dbReference>
<dbReference type="PANTHER" id="PTHR48129">
    <property type="entry name" value="60S RIBOSOMAL PROTEIN L37A"/>
    <property type="match status" value="1"/>
</dbReference>
<dbReference type="PANTHER" id="PTHR48129:SF1">
    <property type="entry name" value="LARGE RIBOSOMAL SUBUNIT PROTEIN EL43"/>
    <property type="match status" value="1"/>
</dbReference>
<dbReference type="Pfam" id="PF01780">
    <property type="entry name" value="Ribosomal_L37ae"/>
    <property type="match status" value="1"/>
</dbReference>
<dbReference type="SUPFAM" id="SSF57829">
    <property type="entry name" value="Zn-binding ribosomal proteins"/>
    <property type="match status" value="1"/>
</dbReference>
<reference key="1">
    <citation type="journal article" date="2004" name="Proc. Natl. Acad. Sci. U.S.A.">
        <title>Genome sequence of Picrophilus torridus and its implications for life around pH 0.</title>
        <authorList>
            <person name="Fuetterer O."/>
            <person name="Angelov A."/>
            <person name="Liesegang H."/>
            <person name="Gottschalk G."/>
            <person name="Schleper C."/>
            <person name="Schepers B."/>
            <person name="Dock C."/>
            <person name="Antranikian G."/>
            <person name="Liebl W."/>
        </authorList>
    </citation>
    <scope>NUCLEOTIDE SEQUENCE [LARGE SCALE GENOMIC DNA]</scope>
    <source>
        <strain>ATCC 700027 / DSM 9790 / JCM 10055 / NBRC 100828 / KAW 2/3</strain>
    </source>
</reference>
<sequence>MAKHTVKVGVAGRFGPRYGVTVRKEWSKYYVQKKAYYVCPKCKQKKVRRIANGIWECRHCSYKFAGGSYNPEYSAEIVREVAGNV</sequence>
<keyword id="KW-0479">Metal-binding</keyword>
<keyword id="KW-0687">Ribonucleoprotein</keyword>
<keyword id="KW-0689">Ribosomal protein</keyword>
<keyword id="KW-0694">RNA-binding</keyword>
<keyword id="KW-0699">rRNA-binding</keyword>
<keyword id="KW-0862">Zinc</keyword>
<keyword id="KW-0863">Zinc-finger</keyword>
<accession>Q6L225</accession>
<feature type="chain" id="PRO_0000139848" description="Large ribosomal subunit protein eL43">
    <location>
        <begin position="1"/>
        <end position="85"/>
    </location>
</feature>
<feature type="zinc finger region" description="C4-type" evidence="1">
    <location>
        <begin position="39"/>
        <end position="60"/>
    </location>
</feature>
<feature type="binding site" evidence="1">
    <location>
        <position position="39"/>
    </location>
    <ligand>
        <name>Zn(2+)</name>
        <dbReference type="ChEBI" id="CHEBI:29105"/>
    </ligand>
</feature>
<feature type="binding site" evidence="1">
    <location>
        <position position="42"/>
    </location>
    <ligand>
        <name>Zn(2+)</name>
        <dbReference type="ChEBI" id="CHEBI:29105"/>
    </ligand>
</feature>
<feature type="binding site" evidence="1">
    <location>
        <position position="57"/>
    </location>
    <ligand>
        <name>Zn(2+)</name>
        <dbReference type="ChEBI" id="CHEBI:29105"/>
    </ligand>
</feature>
<feature type="binding site" evidence="1">
    <location>
        <position position="60"/>
    </location>
    <ligand>
        <name>Zn(2+)</name>
        <dbReference type="ChEBI" id="CHEBI:29105"/>
    </ligand>
</feature>
<organism>
    <name type="scientific">Picrophilus torridus (strain ATCC 700027 / DSM 9790 / JCM 10055 / NBRC 100828 / KAW 2/3)</name>
    <dbReference type="NCBI Taxonomy" id="1122961"/>
    <lineage>
        <taxon>Archaea</taxon>
        <taxon>Methanobacteriati</taxon>
        <taxon>Thermoplasmatota</taxon>
        <taxon>Thermoplasmata</taxon>
        <taxon>Thermoplasmatales</taxon>
        <taxon>Picrophilaceae</taxon>
        <taxon>Picrophilus</taxon>
    </lineage>
</organism>